<protein>
    <recommendedName>
        <fullName>Cilia- and flagella-associated protein 276</fullName>
    </recommendedName>
</protein>
<name>CF276_BOVIN</name>
<sequence length="170" mass="19358">MPLTRDPFQNPALDKDDSYLGKSRASKKLPYKNPTHLAQQQEPWCRLSSTPTITSMKRDGFFFYSEIPKDDLDFRLAALYNHHTGTFKNKSEILTHQETIQDTRRIKTQFPGEFLPAPQPPLITSRANIRHWINPKKESIHSIQGSIVSPHTAATNGGYSRKNDGGFFST</sequence>
<feature type="chain" id="PRO_0000456161" description="Cilia- and flagella-associated protein 276">
    <location>
        <begin position="1"/>
        <end position="170"/>
    </location>
</feature>
<feature type="region of interest" description="Disordered" evidence="3">
    <location>
        <begin position="1"/>
        <end position="37"/>
    </location>
</feature>
<feature type="region of interest" description="Disordered" evidence="3">
    <location>
        <begin position="151"/>
        <end position="170"/>
    </location>
</feature>
<reference key="1">
    <citation type="journal article" date="2009" name="Genome Biol.">
        <title>A whole-genome assembly of the domestic cow, Bos taurus.</title>
        <authorList>
            <person name="Zimin A.V."/>
            <person name="Delcher A.L."/>
            <person name="Florea L."/>
            <person name="Kelley D.R."/>
            <person name="Schatz M.C."/>
            <person name="Puiu D."/>
            <person name="Hanrahan F."/>
            <person name="Pertea G."/>
            <person name="Van Tassell C.P."/>
            <person name="Sonstegard T.S."/>
            <person name="Marcais G."/>
            <person name="Roberts M."/>
            <person name="Subramanian P."/>
            <person name="Yorke J.A."/>
            <person name="Salzberg S.L."/>
        </authorList>
    </citation>
    <scope>NUCLEOTIDE SEQUENCE [LARGE SCALE GENOMIC DNA]</scope>
    <source>
        <strain>Hereford</strain>
    </source>
</reference>
<reference evidence="8" key="2">
    <citation type="journal article" date="2021" name="Cell">
        <title>De novo identification of mammalian ciliary motility proteins using cryo-EM.</title>
        <authorList>
            <person name="Gui M."/>
            <person name="Farley H."/>
            <person name="Anujan P."/>
            <person name="Anderson J.R."/>
            <person name="Maxwell D.W."/>
            <person name="Whitchurch J.B."/>
            <person name="Botsch J.J."/>
            <person name="Qiu T."/>
            <person name="Meleppattu S."/>
            <person name="Singh S.K."/>
            <person name="Zhang Q."/>
            <person name="Thompson J."/>
            <person name="Lucas J.S."/>
            <person name="Bingle C.D."/>
            <person name="Norris D.P."/>
            <person name="Roy S."/>
            <person name="Brown A."/>
        </authorList>
    </citation>
    <scope>STRUCTURE BY ELECTRON MICROSCOPY (3.40 ANGSTROMS)</scope>
    <scope>FUNCTION</scope>
    <scope>SUBCELLULAR LOCATION</scope>
    <scope>TISSUE SPECIFICITY</scope>
</reference>
<reference evidence="9" key="3">
    <citation type="journal article" date="2023" name="Cell">
        <title>Structural specializations of the sperm tail.</title>
        <authorList>
            <person name="Leung M.R."/>
            <person name="Zeng J."/>
            <person name="Wang X."/>
            <person name="Roelofs M.C."/>
            <person name="Huang W."/>
            <person name="Zenezini Chiozzi R."/>
            <person name="Hevler J.F."/>
            <person name="Heck A.J.R."/>
            <person name="Dutcher S.K."/>
            <person name="Brown A."/>
            <person name="Zhang R."/>
            <person name="Zeev-Ben-Mordehai T."/>
        </authorList>
    </citation>
    <scope>STRUCTURE BY ELECTRON MICROSCOPY (3.60 ANGSTROMS)</scope>
    <scope>FUNCTION</scope>
    <scope>SUBUNIT</scope>
    <scope>SUBCELLULAR LOCATION</scope>
</reference>
<proteinExistence type="evidence at protein level"/>
<organism evidence="6">
    <name type="scientific">Bos taurus</name>
    <name type="common">Bovine</name>
    <dbReference type="NCBI Taxonomy" id="9913"/>
    <lineage>
        <taxon>Eukaryota</taxon>
        <taxon>Metazoa</taxon>
        <taxon>Chordata</taxon>
        <taxon>Craniata</taxon>
        <taxon>Vertebrata</taxon>
        <taxon>Euteleostomi</taxon>
        <taxon>Mammalia</taxon>
        <taxon>Eutheria</taxon>
        <taxon>Laurasiatheria</taxon>
        <taxon>Artiodactyla</taxon>
        <taxon>Ruminantia</taxon>
        <taxon>Pecora</taxon>
        <taxon>Bovidae</taxon>
        <taxon>Bovinae</taxon>
        <taxon>Bos</taxon>
    </lineage>
</organism>
<dbReference type="RefSeq" id="XP_002686201.1">
    <property type="nucleotide sequence ID" value="XM_002686155.3"/>
</dbReference>
<dbReference type="RefSeq" id="XP_869508.2">
    <property type="nucleotide sequence ID" value="XM_864415.5"/>
</dbReference>
<dbReference type="PDB" id="7RRO">
    <property type="method" value="EM"/>
    <property type="resolution" value="3.40 A"/>
    <property type="chains" value="q/r/s=1-170"/>
</dbReference>
<dbReference type="PDB" id="8OTZ">
    <property type="method" value="EM"/>
    <property type="resolution" value="3.60 A"/>
    <property type="chains" value="r/s/t=1-170"/>
</dbReference>
<dbReference type="PDB" id="9CPB">
    <property type="method" value="EM"/>
    <property type="resolution" value="3.52 A"/>
    <property type="chains" value="2F/2G/2H=1-170"/>
</dbReference>
<dbReference type="PDBsum" id="7RRO"/>
<dbReference type="PDBsum" id="8OTZ"/>
<dbReference type="PDBsum" id="9CPB"/>
<dbReference type="EMDB" id="EMD-17187"/>
<dbReference type="EMDB" id="EMD-24664"/>
<dbReference type="EMDB" id="EMD-45801"/>
<dbReference type="EMDB" id="EMD-50664"/>
<dbReference type="SMR" id="E1B9I5"/>
<dbReference type="FunCoup" id="E1B9I5">
    <property type="interactions" value="190"/>
</dbReference>
<dbReference type="STRING" id="9913.ENSBTAP00000033480"/>
<dbReference type="PaxDb" id="9913-ENSBTAP00000033480"/>
<dbReference type="Ensembl" id="ENSBTAT00000089757.1">
    <property type="protein sequence ID" value="ENSBTAP00000090388.1"/>
    <property type="gene ID" value="ENSBTAG00000001135.6"/>
</dbReference>
<dbReference type="GeneID" id="613530"/>
<dbReference type="KEGG" id="bta:613530"/>
<dbReference type="CTD" id="127003"/>
<dbReference type="VEuPathDB" id="HostDB:ENSBTAG00000001135"/>
<dbReference type="VGNC" id="VGNC:54906">
    <property type="gene designation" value="CFAP276"/>
</dbReference>
<dbReference type="eggNOG" id="ENOG502S2J1">
    <property type="taxonomic scope" value="Eukaryota"/>
</dbReference>
<dbReference type="GeneTree" id="ENSGT01030000234625"/>
<dbReference type="HOGENOM" id="CLU_133894_0_0_1"/>
<dbReference type="InParanoid" id="E1B9I5"/>
<dbReference type="OMA" id="QWINPKK"/>
<dbReference type="OrthoDB" id="10013535at2759"/>
<dbReference type="TreeFam" id="TF325898"/>
<dbReference type="Proteomes" id="UP000009136">
    <property type="component" value="Chromosome 3"/>
</dbReference>
<dbReference type="Bgee" id="ENSBTAG00000001135">
    <property type="expression patterns" value="Expressed in semen and 44 other cell types or tissues"/>
</dbReference>
<dbReference type="GO" id="GO:0160112">
    <property type="term" value="C:axonemal B tubule inner sheath"/>
    <property type="evidence" value="ECO:0000250"/>
    <property type="project" value="UniProtKB"/>
</dbReference>
<dbReference type="GO" id="GO:0005879">
    <property type="term" value="C:axonemal microtubule"/>
    <property type="evidence" value="ECO:0000314"/>
    <property type="project" value="UniProtKB"/>
</dbReference>
<dbReference type="GO" id="GO:0036126">
    <property type="term" value="C:sperm flagellum"/>
    <property type="evidence" value="ECO:0000250"/>
    <property type="project" value="UniProtKB"/>
</dbReference>
<dbReference type="GO" id="GO:0030317">
    <property type="term" value="P:flagellated sperm motility"/>
    <property type="evidence" value="ECO:0000250"/>
    <property type="project" value="UniProtKB"/>
</dbReference>
<dbReference type="InterPro" id="IPR022179">
    <property type="entry name" value="CFAP276"/>
</dbReference>
<dbReference type="Pfam" id="PF12494">
    <property type="entry name" value="DUF3695"/>
    <property type="match status" value="1"/>
</dbReference>
<comment type="function">
    <text evidence="1 2 4 5">Microtubule inner protein (MIP) part of the dynein-decorated doublet microtubules (DMTs) in cilia axoneme, which is required for motile cilia beating (PubMed:34715025, PubMed:37327785). May play an important role for the maintenance of myelin-axon integrity (By similarity). May affect intracellular Ca(2+) homeostasis (By similarity).</text>
</comment>
<comment type="subunit">
    <text evidence="5">Microtubule inner protein component of sperm flagellar doublet microtubules.</text>
</comment>
<comment type="subcellular location">
    <subcellularLocation>
        <location evidence="4">Cytoplasm</location>
        <location evidence="4">Cytoskeleton</location>
        <location evidence="4">Cilium axoneme</location>
    </subcellularLocation>
    <subcellularLocation>
        <location evidence="5">Cytoplasm</location>
        <location evidence="5">Cytoskeleton</location>
        <location evidence="5">Flagellum axoneme</location>
    </subcellularLocation>
    <subcellularLocation>
        <location evidence="1">Cytoplasm</location>
    </subcellularLocation>
    <subcellularLocation>
        <location evidence="1">Cytoplasm</location>
        <location evidence="1">Cytoskeleton</location>
    </subcellularLocation>
</comment>
<comment type="tissue specificity">
    <text evidence="4">Expressed in trachea multiciliated cells.</text>
</comment>
<evidence type="ECO:0000250" key="1">
    <source>
        <dbReference type="UniProtKB" id="Q5T5A4"/>
    </source>
</evidence>
<evidence type="ECO:0000250" key="2">
    <source>
        <dbReference type="UniProtKB" id="Q9DAD0"/>
    </source>
</evidence>
<evidence type="ECO:0000256" key="3">
    <source>
        <dbReference type="SAM" id="MobiDB-lite"/>
    </source>
</evidence>
<evidence type="ECO:0000269" key="4">
    <source>
    </source>
</evidence>
<evidence type="ECO:0000269" key="5">
    <source>
    </source>
</evidence>
<evidence type="ECO:0000312" key="6">
    <source>
        <dbReference type="Proteomes" id="UP000009136"/>
    </source>
</evidence>
<evidence type="ECO:0000312" key="7">
    <source>
        <dbReference type="VGNC" id="VGNC:54906"/>
    </source>
</evidence>
<evidence type="ECO:0007744" key="8">
    <source>
        <dbReference type="PDB" id="7RRO"/>
    </source>
</evidence>
<evidence type="ECO:0007744" key="9">
    <source>
        <dbReference type="PDB" id="8OTZ"/>
    </source>
</evidence>
<gene>
    <name evidence="7" type="primary">CFAP276</name>
    <name type="synonym">C3H1orf194</name>
</gene>
<keyword id="KW-0002">3D-structure</keyword>
<keyword id="KW-0966">Cell projection</keyword>
<keyword id="KW-0969">Cilium</keyword>
<keyword id="KW-0963">Cytoplasm</keyword>
<keyword id="KW-0206">Cytoskeleton</keyword>
<keyword id="KW-0282">Flagellum</keyword>
<keyword id="KW-1185">Reference proteome</keyword>
<accession>E1B9I5</accession>